<protein>
    <recommendedName>
        <fullName evidence="5">Cytochrome P450 monooxygenase alnD</fullName>
        <ecNumber evidence="7">1.-.-.-</ecNumber>
    </recommendedName>
    <alternativeName>
        <fullName evidence="5">Asperlin biosynthesis cluster protein D</fullName>
    </alternativeName>
</protein>
<comment type="function">
    <text evidence="4">Cytochrome P450 monooxygenase; part of the gene cluster that mediates the biosynthesis of asperlin, a polyketide showing anti-inflammatory, antitumor and antibiotic activities (PubMed:30339758). The first step of the asperlin biosynthesis is the production of the intermediate 2,4,6-octatrienoic acid by the highly redusing polyketide synthase alnA with cleavage of the PKS product by the esterase alnB (PubMed:30339758). 2,4,6-octatrienoic acid is further converted to asperlin via several steps involving the remaining enzymes from the cluster (PubMed:30339758).</text>
</comment>
<comment type="cofactor">
    <cofactor evidence="1">
        <name>heme</name>
        <dbReference type="ChEBI" id="CHEBI:30413"/>
    </cofactor>
</comment>
<comment type="pathway">
    <text evidence="4">Polyketide biosynthesis.</text>
</comment>
<comment type="subcellular location">
    <subcellularLocation>
        <location evidence="2">Membrane</location>
        <topology evidence="2">Single-pass membrane protein</topology>
    </subcellularLocation>
</comment>
<comment type="induction">
    <text evidence="4">Expression is controlled by the asperlin biosynthesis cluster-specific transcription factor alnR.</text>
</comment>
<comment type="disruption phenotype">
    <text evidence="4">Fully eliminates the production of asperlin.</text>
</comment>
<comment type="similarity">
    <text evidence="6">Belongs to the cytochrome P450 family.</text>
</comment>
<keyword id="KW-0325">Glycoprotein</keyword>
<keyword id="KW-0349">Heme</keyword>
<keyword id="KW-0408">Iron</keyword>
<keyword id="KW-0472">Membrane</keyword>
<keyword id="KW-0479">Metal-binding</keyword>
<keyword id="KW-0503">Monooxygenase</keyword>
<keyword id="KW-0560">Oxidoreductase</keyword>
<keyword id="KW-1185">Reference proteome</keyword>
<keyword id="KW-0812">Transmembrane</keyword>
<keyword id="KW-1133">Transmembrane helix</keyword>
<evidence type="ECO:0000250" key="1">
    <source>
        <dbReference type="UniProtKB" id="P04798"/>
    </source>
</evidence>
<evidence type="ECO:0000255" key="2"/>
<evidence type="ECO:0000255" key="3">
    <source>
        <dbReference type="PROSITE-ProRule" id="PRU00498"/>
    </source>
</evidence>
<evidence type="ECO:0000269" key="4">
    <source>
    </source>
</evidence>
<evidence type="ECO:0000303" key="5">
    <source>
    </source>
</evidence>
<evidence type="ECO:0000305" key="6"/>
<evidence type="ECO:0000305" key="7">
    <source>
    </source>
</evidence>
<dbReference type="EC" id="1.-.-.-" evidence="7"/>
<dbReference type="EMBL" id="AACD01000170">
    <property type="protein sequence ID" value="EAA61509.1"/>
    <property type="molecule type" value="Genomic_DNA"/>
</dbReference>
<dbReference type="EMBL" id="BN001306">
    <property type="protein sequence ID" value="CBF82299.1"/>
    <property type="molecule type" value="Genomic_DNA"/>
</dbReference>
<dbReference type="RefSeq" id="XP_682487.1">
    <property type="nucleotide sequence ID" value="XM_677395.1"/>
</dbReference>
<dbReference type="SMR" id="A0A1U8QFC3"/>
<dbReference type="STRING" id="227321.A0A1U8QFC3"/>
<dbReference type="GlyCosmos" id="A0A1U8QFC3">
    <property type="glycosylation" value="1 site, No reported glycans"/>
</dbReference>
<dbReference type="EnsemblFungi" id="CBF82299">
    <property type="protein sequence ID" value="CBF82299"/>
    <property type="gene ID" value="ANIA_09218"/>
</dbReference>
<dbReference type="GeneID" id="2867991"/>
<dbReference type="KEGG" id="ani:ANIA_09218"/>
<dbReference type="VEuPathDB" id="FungiDB:AN9218"/>
<dbReference type="eggNOG" id="KOG0157">
    <property type="taxonomic scope" value="Eukaryota"/>
</dbReference>
<dbReference type="HOGENOM" id="CLU_001570_31_0_1"/>
<dbReference type="InParanoid" id="A0A1U8QFC3"/>
<dbReference type="OMA" id="IRPLNCY"/>
<dbReference type="OrthoDB" id="1470350at2759"/>
<dbReference type="Proteomes" id="UP000000560">
    <property type="component" value="Chromosome VI"/>
</dbReference>
<dbReference type="GO" id="GO:0016020">
    <property type="term" value="C:membrane"/>
    <property type="evidence" value="ECO:0007669"/>
    <property type="project" value="UniProtKB-SubCell"/>
</dbReference>
<dbReference type="GO" id="GO:0020037">
    <property type="term" value="F:heme binding"/>
    <property type="evidence" value="ECO:0007669"/>
    <property type="project" value="InterPro"/>
</dbReference>
<dbReference type="GO" id="GO:0005506">
    <property type="term" value="F:iron ion binding"/>
    <property type="evidence" value="ECO:0007669"/>
    <property type="project" value="InterPro"/>
</dbReference>
<dbReference type="GO" id="GO:0004497">
    <property type="term" value="F:monooxygenase activity"/>
    <property type="evidence" value="ECO:0007669"/>
    <property type="project" value="UniProtKB-KW"/>
</dbReference>
<dbReference type="GO" id="GO:0016705">
    <property type="term" value="F:oxidoreductase activity, acting on paired donors, with incorporation or reduction of molecular oxygen"/>
    <property type="evidence" value="ECO:0007669"/>
    <property type="project" value="InterPro"/>
</dbReference>
<dbReference type="GO" id="GO:0044550">
    <property type="term" value="P:secondary metabolite biosynthetic process"/>
    <property type="evidence" value="ECO:0007669"/>
    <property type="project" value="UniProtKB-ARBA"/>
</dbReference>
<dbReference type="CDD" id="cd00302">
    <property type="entry name" value="cytochrome_P450"/>
    <property type="match status" value="1"/>
</dbReference>
<dbReference type="FunFam" id="1.10.630.10:FF:000090">
    <property type="entry name" value="Cytochrome P450 monooxygenase"/>
    <property type="match status" value="1"/>
</dbReference>
<dbReference type="Gene3D" id="1.10.630.10">
    <property type="entry name" value="Cytochrome P450"/>
    <property type="match status" value="1"/>
</dbReference>
<dbReference type="InterPro" id="IPR001128">
    <property type="entry name" value="Cyt_P450"/>
</dbReference>
<dbReference type="InterPro" id="IPR002401">
    <property type="entry name" value="Cyt_P450_E_grp-I"/>
</dbReference>
<dbReference type="InterPro" id="IPR036396">
    <property type="entry name" value="Cyt_P450_sf"/>
</dbReference>
<dbReference type="InterPro" id="IPR050121">
    <property type="entry name" value="Cytochrome_P450_monoxygenase"/>
</dbReference>
<dbReference type="PANTHER" id="PTHR24305">
    <property type="entry name" value="CYTOCHROME P450"/>
    <property type="match status" value="1"/>
</dbReference>
<dbReference type="PANTHER" id="PTHR24305:SF87">
    <property type="entry name" value="CYTOCHROME P450 MONOOXYGENASE ALND-RELATED"/>
    <property type="match status" value="1"/>
</dbReference>
<dbReference type="Pfam" id="PF00067">
    <property type="entry name" value="p450"/>
    <property type="match status" value="1"/>
</dbReference>
<dbReference type="PRINTS" id="PR00463">
    <property type="entry name" value="EP450I"/>
</dbReference>
<dbReference type="PRINTS" id="PR00385">
    <property type="entry name" value="P450"/>
</dbReference>
<dbReference type="SUPFAM" id="SSF48264">
    <property type="entry name" value="Cytochrome P450"/>
    <property type="match status" value="1"/>
</dbReference>
<sequence>MTVQTFYLIGEKERSTRELDVGDPKTVNALRQGLAEVFNILSAEGIDFHDCHGPISTIESILRSESVGITVNGHPVRYPQQPQGIPIFGNHFEIYPDHLGNHERLFNKYGSVIRTNNMGRVTYLTNDPDIAALAFRDNDYFTKAPSSASHPLYGIRDQTALFLCDTESPAWKEAHKFIPPSMTPRAVRHYTPLLQQSVDTVFNVLDKFDNNGQAFNVYHLTAKLASQVICQLVLGVDLHHFDAVDSPVHPIIVLLQRYLTLNRRVQTKGAWYSYLPFGDPVALKNTRRELYGLIEEAVITCQKKNGGTTGDLPIQTAALHATCLVDYLARATDEHGNKLRHEYILSNTLALVGAGFVTSSAFLSWLIYSLVEYPGQQDRLLQELVDHGAVSDKRWTYDEIQALPFLDAFVKEAQRMHSPSFQPARNVKKDIILPGGWALPQGSILIPSIPHLHHHTAYWENPDRFDPDRWRTEKVKNRHRSVYVPFAAGPRSCIGFNVALQEVKISLAELVYRYEFVNATNEGIEYDPDFIVIRPVNFYVRAIRRTEWPARSP</sequence>
<proteinExistence type="evidence at transcript level"/>
<name>ALND_EMENI</name>
<organism>
    <name type="scientific">Emericella nidulans (strain FGSC A4 / ATCC 38163 / CBS 112.46 / NRRL 194 / M139)</name>
    <name type="common">Aspergillus nidulans</name>
    <dbReference type="NCBI Taxonomy" id="227321"/>
    <lineage>
        <taxon>Eukaryota</taxon>
        <taxon>Fungi</taxon>
        <taxon>Dikarya</taxon>
        <taxon>Ascomycota</taxon>
        <taxon>Pezizomycotina</taxon>
        <taxon>Eurotiomycetes</taxon>
        <taxon>Eurotiomycetidae</taxon>
        <taxon>Eurotiales</taxon>
        <taxon>Aspergillaceae</taxon>
        <taxon>Aspergillus</taxon>
        <taxon>Aspergillus subgen. Nidulantes</taxon>
    </lineage>
</organism>
<accession>A0A1U8QFC3</accession>
<accession>C8VJR4</accession>
<accession>Q5AR62</accession>
<reference key="1">
    <citation type="journal article" date="2005" name="Nature">
        <title>Sequencing of Aspergillus nidulans and comparative analysis with A. fumigatus and A. oryzae.</title>
        <authorList>
            <person name="Galagan J.E."/>
            <person name="Calvo S.E."/>
            <person name="Cuomo C."/>
            <person name="Ma L.-J."/>
            <person name="Wortman J.R."/>
            <person name="Batzoglou S."/>
            <person name="Lee S.-I."/>
            <person name="Bastuerkmen M."/>
            <person name="Spevak C.C."/>
            <person name="Clutterbuck J."/>
            <person name="Kapitonov V."/>
            <person name="Jurka J."/>
            <person name="Scazzocchio C."/>
            <person name="Farman M.L."/>
            <person name="Butler J."/>
            <person name="Purcell S."/>
            <person name="Harris S."/>
            <person name="Braus G.H."/>
            <person name="Draht O."/>
            <person name="Busch S."/>
            <person name="D'Enfert C."/>
            <person name="Bouchier C."/>
            <person name="Goldman G.H."/>
            <person name="Bell-Pedersen D."/>
            <person name="Griffiths-Jones S."/>
            <person name="Doonan J.H."/>
            <person name="Yu J."/>
            <person name="Vienken K."/>
            <person name="Pain A."/>
            <person name="Freitag M."/>
            <person name="Selker E.U."/>
            <person name="Archer D.B."/>
            <person name="Penalva M.A."/>
            <person name="Oakley B.R."/>
            <person name="Momany M."/>
            <person name="Tanaka T."/>
            <person name="Kumagai T."/>
            <person name="Asai K."/>
            <person name="Machida M."/>
            <person name="Nierman W.C."/>
            <person name="Denning D.W."/>
            <person name="Caddick M.X."/>
            <person name="Hynes M."/>
            <person name="Paoletti M."/>
            <person name="Fischer R."/>
            <person name="Miller B.L."/>
            <person name="Dyer P.S."/>
            <person name="Sachs M.S."/>
            <person name="Osmani S.A."/>
            <person name="Birren B.W."/>
        </authorList>
    </citation>
    <scope>NUCLEOTIDE SEQUENCE [LARGE SCALE GENOMIC DNA]</scope>
    <source>
        <strain>FGSC A4 / ATCC 38163 / CBS 112.46 / NRRL 194 / M139</strain>
    </source>
</reference>
<reference key="2">
    <citation type="journal article" date="2009" name="Fungal Genet. Biol.">
        <title>The 2008 update of the Aspergillus nidulans genome annotation: a community effort.</title>
        <authorList>
            <person name="Wortman J.R."/>
            <person name="Gilsenan J.M."/>
            <person name="Joardar V."/>
            <person name="Deegan J."/>
            <person name="Clutterbuck J."/>
            <person name="Andersen M.R."/>
            <person name="Archer D."/>
            <person name="Bencina M."/>
            <person name="Braus G."/>
            <person name="Coutinho P."/>
            <person name="von Dohren H."/>
            <person name="Doonan J."/>
            <person name="Driessen A.J."/>
            <person name="Durek P."/>
            <person name="Espeso E."/>
            <person name="Fekete E."/>
            <person name="Flipphi M."/>
            <person name="Estrada C.G."/>
            <person name="Geysens S."/>
            <person name="Goldman G."/>
            <person name="de Groot P.W."/>
            <person name="Hansen K."/>
            <person name="Harris S.D."/>
            <person name="Heinekamp T."/>
            <person name="Helmstaedt K."/>
            <person name="Henrissat B."/>
            <person name="Hofmann G."/>
            <person name="Homan T."/>
            <person name="Horio T."/>
            <person name="Horiuchi H."/>
            <person name="James S."/>
            <person name="Jones M."/>
            <person name="Karaffa L."/>
            <person name="Karanyi Z."/>
            <person name="Kato M."/>
            <person name="Keller N."/>
            <person name="Kelly D.E."/>
            <person name="Kiel J.A."/>
            <person name="Kim J.M."/>
            <person name="van der Klei I.J."/>
            <person name="Klis F.M."/>
            <person name="Kovalchuk A."/>
            <person name="Krasevec N."/>
            <person name="Kubicek C.P."/>
            <person name="Liu B."/>
            <person name="Maccabe A."/>
            <person name="Meyer V."/>
            <person name="Mirabito P."/>
            <person name="Miskei M."/>
            <person name="Mos M."/>
            <person name="Mullins J."/>
            <person name="Nelson D.R."/>
            <person name="Nielsen J."/>
            <person name="Oakley B.R."/>
            <person name="Osmani S.A."/>
            <person name="Pakula T."/>
            <person name="Paszewski A."/>
            <person name="Paulsen I."/>
            <person name="Pilsyk S."/>
            <person name="Pocsi I."/>
            <person name="Punt P.J."/>
            <person name="Ram A.F."/>
            <person name="Ren Q."/>
            <person name="Robellet X."/>
            <person name="Robson G."/>
            <person name="Seiboth B."/>
            <person name="van Solingen P."/>
            <person name="Specht T."/>
            <person name="Sun J."/>
            <person name="Taheri-Talesh N."/>
            <person name="Takeshita N."/>
            <person name="Ussery D."/>
            <person name="vanKuyk P.A."/>
            <person name="Visser H."/>
            <person name="van de Vondervoort P.J."/>
            <person name="de Vries R.P."/>
            <person name="Walton J."/>
            <person name="Xiang X."/>
            <person name="Xiong Y."/>
            <person name="Zeng A.P."/>
            <person name="Brandt B.W."/>
            <person name="Cornell M.J."/>
            <person name="van den Hondel C.A."/>
            <person name="Visser J."/>
            <person name="Oliver S.G."/>
            <person name="Turner G."/>
        </authorList>
    </citation>
    <scope>GENOME REANNOTATION</scope>
    <source>
        <strain>FGSC A4 / ATCC 38163 / CBS 112.46 / NRRL 194 / M139</strain>
    </source>
</reference>
<reference key="3">
    <citation type="journal article" date="2018" name="ACS Chem. Biol.">
        <title>Hybrid transcription factor engineering activates the silent secondary metabolite gene cluster for (+)-asperlin in Aspergillus nidulans.</title>
        <authorList>
            <person name="Grau M.F."/>
            <person name="Entwistle R."/>
            <person name="Chiang Y.M."/>
            <person name="Ahuja M."/>
            <person name="Oakley C.E."/>
            <person name="Akashi T."/>
            <person name="Wang C.C.C."/>
            <person name="Todd R.B."/>
            <person name="Oakley B.R."/>
        </authorList>
    </citation>
    <scope>IDENTIFICATION</scope>
    <scope>DISRUPTION PHENOTYPE</scope>
    <scope>FUNCTION</scope>
    <scope>INDUCTION</scope>
    <scope>PATHWAY</scope>
</reference>
<feature type="chain" id="PRO_0000445942" description="Cytochrome P450 monooxygenase alnD">
    <location>
        <begin position="1"/>
        <end position="553"/>
    </location>
</feature>
<feature type="transmembrane region" description="Helical" evidence="2">
    <location>
        <begin position="351"/>
        <end position="371"/>
    </location>
</feature>
<feature type="binding site" description="axial binding residue" evidence="1">
    <location>
        <position position="493"/>
    </location>
    <ligand>
        <name>heme</name>
        <dbReference type="ChEBI" id="CHEBI:30413"/>
    </ligand>
    <ligandPart>
        <name>Fe</name>
        <dbReference type="ChEBI" id="CHEBI:18248"/>
    </ligandPart>
</feature>
<feature type="glycosylation site" description="N-linked (GlcNAc...) asparagine" evidence="3">
    <location>
        <position position="518"/>
    </location>
</feature>
<gene>
    <name evidence="5" type="primary">alnD</name>
    <name type="ORF">AN9218.2</name>
</gene>